<proteinExistence type="evidence at transcript level"/>
<accession>Q8S929</accession>
<accession>O80583</accession>
<accession>Q3EBG5</accession>
<sequence>MKALCDRFVPQQCSSSSKSDTHDKSPLVSDSGPSDNKSKFTLWSNVFTSSSSVSQPYRESSTSGHKQVCTTRNGWTAFVKRVSMASGAIRRFQERVLGPNRTGLPSTTSDVWLLGVCYKISADENSGETDTGTVLAALQLDFSSKILMTYRKGFEPFRDTTYTSDVNWGCMIRSSQMLFAQALLFHRLGRAWTKKSELPEQEYLETLEPFGDSEPSAFSIHNLIIAGASYGLAAGSWVGPYAICRAWESLACKKRKQTDSKNQTLPMAVHIVSGSEDGERGGAPILCIEDATKSCLEFSKGQSEWTPIILLVPLVLGLDSVNPRYIPSLVATFTFPQSVGILGGKPGASTYIVGVQEDKGFYLDPHEVQQVVTVNKETPDVDTSSYHCNVLRYVPLESLDPSLALGFYCRDKDDFDDFCLRALKLAEESNGAPLFTVTQTHTAINQSNYGFADDDSEDEREDDWQML</sequence>
<evidence type="ECO:0000250" key="1">
    <source>
        <dbReference type="UniProtKB" id="Q2XPP4"/>
    </source>
</evidence>
<evidence type="ECO:0000250" key="2">
    <source>
        <dbReference type="UniProtKB" id="Q8BGE6"/>
    </source>
</evidence>
<evidence type="ECO:0000250" key="3">
    <source>
        <dbReference type="UniProtKB" id="Q9Y4P1"/>
    </source>
</evidence>
<evidence type="ECO:0000256" key="4">
    <source>
        <dbReference type="SAM" id="MobiDB-lite"/>
    </source>
</evidence>
<evidence type="ECO:0000269" key="5">
    <source>
    </source>
</evidence>
<evidence type="ECO:0000303" key="6">
    <source>
    </source>
</evidence>
<evidence type="ECO:0000305" key="7"/>
<name>ATG4A_ARATH</name>
<gene>
    <name evidence="6" type="primary">ATG4A</name>
    <name evidence="6" type="synonym">APG4A</name>
    <name type="ordered locus">At2g44140</name>
    <name type="ORF">F6E13.27</name>
</gene>
<reference key="1">
    <citation type="journal article" date="2002" name="Plant Physiol.">
        <title>Leaf senescence and starvation-induced chlorosis are accelerated by the disruption of an Arabidopsis autophagy gene.</title>
        <authorList>
            <person name="Hanaoka H."/>
            <person name="Noda T."/>
            <person name="Shirano Y."/>
            <person name="Kato T."/>
            <person name="Hayashi H."/>
            <person name="Shibata D."/>
            <person name="Tabata S."/>
            <person name="Ohsumi Y."/>
        </authorList>
    </citation>
    <scope>NUCLEOTIDE SEQUENCE [MRNA] (ISOFORM 1)</scope>
    <scope>NOMENCLATURE</scope>
    <scope>GENE FAMILY</scope>
</reference>
<reference key="2">
    <citation type="journal article" date="1999" name="Nature">
        <title>Sequence and analysis of chromosome 2 of the plant Arabidopsis thaliana.</title>
        <authorList>
            <person name="Lin X."/>
            <person name="Kaul S."/>
            <person name="Rounsley S.D."/>
            <person name="Shea T.P."/>
            <person name="Benito M.-I."/>
            <person name="Town C.D."/>
            <person name="Fujii C.Y."/>
            <person name="Mason T.M."/>
            <person name="Bowman C.L."/>
            <person name="Barnstead M.E."/>
            <person name="Feldblyum T.V."/>
            <person name="Buell C.R."/>
            <person name="Ketchum K.A."/>
            <person name="Lee J.J."/>
            <person name="Ronning C.M."/>
            <person name="Koo H.L."/>
            <person name="Moffat K.S."/>
            <person name="Cronin L.A."/>
            <person name="Shen M."/>
            <person name="Pai G."/>
            <person name="Van Aken S."/>
            <person name="Umayam L."/>
            <person name="Tallon L.J."/>
            <person name="Gill J.E."/>
            <person name="Adams M.D."/>
            <person name="Carrera A.J."/>
            <person name="Creasy T.H."/>
            <person name="Goodman H.M."/>
            <person name="Somerville C.R."/>
            <person name="Copenhaver G.P."/>
            <person name="Preuss D."/>
            <person name="Nierman W.C."/>
            <person name="White O."/>
            <person name="Eisen J.A."/>
            <person name="Salzberg S.L."/>
            <person name="Fraser C.M."/>
            <person name="Venter J.C."/>
        </authorList>
    </citation>
    <scope>NUCLEOTIDE SEQUENCE [LARGE SCALE GENOMIC DNA]</scope>
    <source>
        <strain>cv. Columbia</strain>
    </source>
</reference>
<reference key="3">
    <citation type="journal article" date="2017" name="Plant J.">
        <title>Araport11: a complete reannotation of the Arabidopsis thaliana reference genome.</title>
        <authorList>
            <person name="Cheng C.Y."/>
            <person name="Krishnakumar V."/>
            <person name="Chan A.P."/>
            <person name="Thibaud-Nissen F."/>
            <person name="Schobel S."/>
            <person name="Town C.D."/>
        </authorList>
    </citation>
    <scope>GENOME REANNOTATION</scope>
    <source>
        <strain>cv. Columbia</strain>
    </source>
</reference>
<reference key="4">
    <citation type="submission" date="2006-07" db="EMBL/GenBank/DDBJ databases">
        <title>Large-scale analysis of RIKEN Arabidopsis full-length (RAFL) cDNAs.</title>
        <authorList>
            <person name="Totoki Y."/>
            <person name="Seki M."/>
            <person name="Ishida J."/>
            <person name="Nakajima M."/>
            <person name="Enju A."/>
            <person name="Kamiya A."/>
            <person name="Narusaka M."/>
            <person name="Shin-i T."/>
            <person name="Nakagawa M."/>
            <person name="Sakamoto N."/>
            <person name="Oishi K."/>
            <person name="Kohara Y."/>
            <person name="Kobayashi M."/>
            <person name="Toyoda A."/>
            <person name="Sakaki Y."/>
            <person name="Sakurai T."/>
            <person name="Iida K."/>
            <person name="Akiyama K."/>
            <person name="Satou M."/>
            <person name="Toyoda T."/>
            <person name="Konagaya A."/>
            <person name="Carninci P."/>
            <person name="Kawai J."/>
            <person name="Hayashizaki Y."/>
            <person name="Shinozaki K."/>
        </authorList>
    </citation>
    <scope>NUCLEOTIDE SEQUENCE [LARGE SCALE MRNA]</scope>
    <source>
        <strain>cv. Columbia</strain>
    </source>
</reference>
<reference key="5">
    <citation type="journal article" date="2004" name="Plant Cell">
        <title>Processing of ATG8s, ubiquitin-like proteins, and their deconjugation by ATG4s are essential for plant autophagy.</title>
        <authorList>
            <person name="Yoshimoto K."/>
            <person name="Hanaoka H."/>
            <person name="Sato S."/>
            <person name="Kato T."/>
            <person name="Tabata S."/>
            <person name="Noda T."/>
            <person name="Ohsumi Y."/>
        </authorList>
    </citation>
    <scope>TISSUE SPECIFICITY</scope>
</reference>
<comment type="function">
    <text evidence="1 3">Cysteine protease that plays a key role in autophagy by mediating both proteolytic activation and delipidation of ATG8 family proteins. The protease activity is required for proteolytic activation of ATG8 family proteins: cleaves the C-terminal amino acid of ATG8 proteins to reveal a C-terminal glycine (By similarity). Exposure of the glycine at the C-terminus is essential for ATG8 proteins conjugation to phosphatidylethanolamine (PE) and insertion to membranes, which is necessary for autophagy. In addition to the protease activity, also mediates delipidation of PE-conjugated ATG8 proteins (By similarity).</text>
</comment>
<comment type="catalytic activity">
    <reaction evidence="3">
        <text>[protein]-C-terminal L-amino acid-glycyl-phosphatidylethanolamide + H2O = [protein]-C-terminal L-amino acid-glycine + a 1,2-diacyl-sn-glycero-3-phosphoethanolamine</text>
        <dbReference type="Rhea" id="RHEA:67548"/>
        <dbReference type="Rhea" id="RHEA-COMP:17323"/>
        <dbReference type="Rhea" id="RHEA-COMP:17324"/>
        <dbReference type="ChEBI" id="CHEBI:15377"/>
        <dbReference type="ChEBI" id="CHEBI:64612"/>
        <dbReference type="ChEBI" id="CHEBI:172940"/>
        <dbReference type="ChEBI" id="CHEBI:172941"/>
    </reaction>
    <physiologicalReaction direction="left-to-right" evidence="3">
        <dbReference type="Rhea" id="RHEA:67549"/>
    </physiologicalReaction>
</comment>
<comment type="subunit">
    <text evidence="3">Interacts with ATG8.</text>
</comment>
<comment type="subcellular location">
    <subcellularLocation>
        <location evidence="2">Cytoplasm</location>
    </subcellularLocation>
</comment>
<comment type="alternative products">
    <event type="alternative splicing"/>
    <isoform>
        <id>Q8S929-1</id>
        <name>1</name>
        <sequence type="displayed"/>
    </isoform>
    <isoform>
        <id>Q8S929-2</id>
        <name>2</name>
        <sequence type="described" ref="VSP_025232"/>
    </isoform>
</comment>
<comment type="tissue specificity">
    <text evidence="5">Constitutively expressed.</text>
</comment>
<comment type="similarity">
    <text evidence="7">Belongs to the peptidase C54 family.</text>
</comment>
<comment type="sequence caution" evidence="7">
    <conflict type="erroneous gene model prediction">
        <sequence resource="EMBL-CDS" id="AAC23418"/>
    </conflict>
</comment>
<keyword id="KW-0025">Alternative splicing</keyword>
<keyword id="KW-0072">Autophagy</keyword>
<keyword id="KW-0963">Cytoplasm</keyword>
<keyword id="KW-0378">Hydrolase</keyword>
<keyword id="KW-0645">Protease</keyword>
<keyword id="KW-0653">Protein transport</keyword>
<keyword id="KW-1185">Reference proteome</keyword>
<keyword id="KW-0788">Thiol protease</keyword>
<keyword id="KW-0813">Transport</keyword>
<keyword id="KW-0833">Ubl conjugation pathway</keyword>
<dbReference type="EC" id="3.4.22.-" evidence="3"/>
<dbReference type="EMBL" id="AB073171">
    <property type="protein sequence ID" value="BAB88383.1"/>
    <property type="molecule type" value="mRNA"/>
</dbReference>
<dbReference type="EMBL" id="AC004005">
    <property type="protein sequence ID" value="AAC23418.1"/>
    <property type="status" value="ALT_SEQ"/>
    <property type="molecule type" value="Genomic_DNA"/>
</dbReference>
<dbReference type="EMBL" id="CP002685">
    <property type="protein sequence ID" value="AEC10380.1"/>
    <property type="molecule type" value="Genomic_DNA"/>
</dbReference>
<dbReference type="EMBL" id="CP002685">
    <property type="protein sequence ID" value="AEC10381.1"/>
    <property type="molecule type" value="Genomic_DNA"/>
</dbReference>
<dbReference type="EMBL" id="CP002685">
    <property type="protein sequence ID" value="ANM62619.1"/>
    <property type="molecule type" value="Genomic_DNA"/>
</dbReference>
<dbReference type="EMBL" id="AK227012">
    <property type="protein sequence ID" value="BAE99076.1"/>
    <property type="molecule type" value="mRNA"/>
</dbReference>
<dbReference type="PIR" id="T00694">
    <property type="entry name" value="T00694"/>
</dbReference>
<dbReference type="RefSeq" id="NP_001318423.1">
    <molecule id="Q8S929-2"/>
    <property type="nucleotide sequence ID" value="NM_001337075.1"/>
</dbReference>
<dbReference type="RefSeq" id="NP_001324765.1">
    <molecule id="Q8S929-1"/>
    <property type="nucleotide sequence ID" value="NM_001337076.1"/>
</dbReference>
<dbReference type="RefSeq" id="NP_850412.1">
    <molecule id="Q8S929-1"/>
    <property type="nucleotide sequence ID" value="NM_180081.4"/>
</dbReference>
<dbReference type="SMR" id="Q8S929"/>
<dbReference type="FunCoup" id="Q8S929">
    <property type="interactions" value="3321"/>
</dbReference>
<dbReference type="STRING" id="3702.Q8S929"/>
<dbReference type="MEROPS" id="C54.011"/>
<dbReference type="PaxDb" id="3702-AT2G44140.1"/>
<dbReference type="EnsemblPlants" id="AT2G44140.1">
    <molecule id="Q8S929-1"/>
    <property type="protein sequence ID" value="AT2G44140.1"/>
    <property type="gene ID" value="AT2G44140"/>
</dbReference>
<dbReference type="EnsemblPlants" id="AT2G44140.2">
    <molecule id="Q8S929-2"/>
    <property type="protein sequence ID" value="AT2G44140.2"/>
    <property type="gene ID" value="AT2G44140"/>
</dbReference>
<dbReference type="EnsemblPlants" id="AT2G44140.3">
    <molecule id="Q8S929-1"/>
    <property type="protein sequence ID" value="AT2G44140.3"/>
    <property type="gene ID" value="AT2G44140"/>
</dbReference>
<dbReference type="GeneID" id="819020"/>
<dbReference type="Gramene" id="AT2G44140.1">
    <molecule id="Q8S929-1"/>
    <property type="protein sequence ID" value="AT2G44140.1"/>
    <property type="gene ID" value="AT2G44140"/>
</dbReference>
<dbReference type="Gramene" id="AT2G44140.2">
    <molecule id="Q8S929-2"/>
    <property type="protein sequence ID" value="AT2G44140.2"/>
    <property type="gene ID" value="AT2G44140"/>
</dbReference>
<dbReference type="Gramene" id="AT2G44140.3">
    <molecule id="Q8S929-1"/>
    <property type="protein sequence ID" value="AT2G44140.3"/>
    <property type="gene ID" value="AT2G44140"/>
</dbReference>
<dbReference type="KEGG" id="ath:AT2G44140"/>
<dbReference type="Araport" id="AT2G44140"/>
<dbReference type="TAIR" id="AT2G44140">
    <property type="gene designation" value="ATG4A"/>
</dbReference>
<dbReference type="eggNOG" id="KOG2674">
    <property type="taxonomic scope" value="Eukaryota"/>
</dbReference>
<dbReference type="InParanoid" id="Q8S929"/>
<dbReference type="PhylomeDB" id="Q8S929"/>
<dbReference type="PRO" id="PR:Q8S929"/>
<dbReference type="Proteomes" id="UP000006548">
    <property type="component" value="Chromosome 2"/>
</dbReference>
<dbReference type="ExpressionAtlas" id="Q8S929">
    <property type="expression patterns" value="baseline and differential"/>
</dbReference>
<dbReference type="GO" id="GO:0005737">
    <property type="term" value="C:cytoplasm"/>
    <property type="evidence" value="ECO:0007669"/>
    <property type="project" value="UniProtKB-SubCell"/>
</dbReference>
<dbReference type="GO" id="GO:0008234">
    <property type="term" value="F:cysteine-type peptidase activity"/>
    <property type="evidence" value="ECO:0007669"/>
    <property type="project" value="UniProtKB-KW"/>
</dbReference>
<dbReference type="GO" id="GO:0004175">
    <property type="term" value="F:endopeptidase activity"/>
    <property type="evidence" value="ECO:0000314"/>
    <property type="project" value="TAIR"/>
</dbReference>
<dbReference type="GO" id="GO:0019786">
    <property type="term" value="F:protein-phosphatidylethanolamide deconjugating activity"/>
    <property type="evidence" value="ECO:0007669"/>
    <property type="project" value="InterPro"/>
</dbReference>
<dbReference type="GO" id="GO:0006914">
    <property type="term" value="P:autophagy"/>
    <property type="evidence" value="ECO:0007669"/>
    <property type="project" value="UniProtKB-KW"/>
</dbReference>
<dbReference type="GO" id="GO:0015031">
    <property type="term" value="P:protein transport"/>
    <property type="evidence" value="ECO:0007669"/>
    <property type="project" value="UniProtKB-KW"/>
</dbReference>
<dbReference type="GO" id="GO:0006508">
    <property type="term" value="P:proteolysis"/>
    <property type="evidence" value="ECO:0007669"/>
    <property type="project" value="UniProtKB-KW"/>
</dbReference>
<dbReference type="InterPro" id="IPR038765">
    <property type="entry name" value="Papain-like_cys_pep_sf"/>
</dbReference>
<dbReference type="InterPro" id="IPR005078">
    <property type="entry name" value="Peptidase_C54"/>
</dbReference>
<dbReference type="InterPro" id="IPR046792">
    <property type="entry name" value="Peptidase_C54_cat"/>
</dbReference>
<dbReference type="PANTHER" id="PTHR22624:SF49">
    <property type="entry name" value="CYSTEINE PROTEASE"/>
    <property type="match status" value="1"/>
</dbReference>
<dbReference type="PANTHER" id="PTHR22624">
    <property type="entry name" value="CYSTEINE PROTEASE ATG4"/>
    <property type="match status" value="1"/>
</dbReference>
<dbReference type="Pfam" id="PF03416">
    <property type="entry name" value="Peptidase_C54"/>
    <property type="match status" value="1"/>
</dbReference>
<dbReference type="SUPFAM" id="SSF54001">
    <property type="entry name" value="Cysteine proteinases"/>
    <property type="match status" value="1"/>
</dbReference>
<organism>
    <name type="scientific">Arabidopsis thaliana</name>
    <name type="common">Mouse-ear cress</name>
    <dbReference type="NCBI Taxonomy" id="3702"/>
    <lineage>
        <taxon>Eukaryota</taxon>
        <taxon>Viridiplantae</taxon>
        <taxon>Streptophyta</taxon>
        <taxon>Embryophyta</taxon>
        <taxon>Tracheophyta</taxon>
        <taxon>Spermatophyta</taxon>
        <taxon>Magnoliopsida</taxon>
        <taxon>eudicotyledons</taxon>
        <taxon>Gunneridae</taxon>
        <taxon>Pentapetalae</taxon>
        <taxon>rosids</taxon>
        <taxon>malvids</taxon>
        <taxon>Brassicales</taxon>
        <taxon>Brassicaceae</taxon>
        <taxon>Camelineae</taxon>
        <taxon>Arabidopsis</taxon>
    </lineage>
</organism>
<feature type="chain" id="PRO_0000286898" description="Cysteine protease ATG4a">
    <location>
        <begin position="1"/>
        <end position="467"/>
    </location>
</feature>
<feature type="region of interest" description="Disordered" evidence="4">
    <location>
        <begin position="1"/>
        <end position="35"/>
    </location>
</feature>
<feature type="region of interest" description="Disordered" evidence="4">
    <location>
        <begin position="448"/>
        <end position="467"/>
    </location>
</feature>
<feature type="compositionally biased region" description="Acidic residues" evidence="4">
    <location>
        <begin position="452"/>
        <end position="467"/>
    </location>
</feature>
<feature type="active site" description="Nucleophile" evidence="3">
    <location>
        <position position="170"/>
    </location>
</feature>
<feature type="active site" evidence="3">
    <location>
        <position position="364"/>
    </location>
</feature>
<feature type="active site" evidence="3">
    <location>
        <position position="366"/>
    </location>
</feature>
<feature type="splice variant" id="VSP_025232" description="In isoform 2." evidence="7">
    <original>MKALCDRFVPQQCSSSSKSDTHDKSPLVSDSGPSDNKSKFTLWSNVFTSSSSVSQPY</original>
    <variation>MRRTRCSWCFMS</variation>
    <location>
        <begin position="1"/>
        <end position="57"/>
    </location>
</feature>
<protein>
    <recommendedName>
        <fullName evidence="7">Cysteine protease ATG4a</fullName>
        <ecNumber evidence="3">3.4.22.-</ecNumber>
    </recommendedName>
    <alternativeName>
        <fullName evidence="6">Autophagy-related protein 4 homolog a</fullName>
        <shortName evidence="6">AtAPG4a</shortName>
        <shortName evidence="6">Protein autophagy 4a</shortName>
    </alternativeName>
</protein>